<comment type="function">
    <text>Active on neuromusculature.</text>
</comment>
<comment type="subcellular location">
    <subcellularLocation>
        <location>Secreted</location>
    </subcellularLocation>
</comment>
<comment type="similarity">
    <text evidence="2">Belongs to the FARP (FMRFamide related peptide) family.</text>
</comment>
<protein>
    <recommendedName>
        <fullName>FMRFamide-like neuropeptide PF3</fullName>
    </recommendedName>
    <alternativeName>
        <fullName>KSAYMRF-amide</fullName>
    </alternativeName>
</protein>
<sequence length="7" mass="902">KSAYMRF</sequence>
<accession>P81298</accession>
<keyword id="KW-0027">Amidation</keyword>
<keyword id="KW-0903">Direct protein sequencing</keyword>
<keyword id="KW-0527">Neuropeptide</keyword>
<keyword id="KW-0964">Secreted</keyword>
<feature type="peptide" id="PRO_0000043677" description="FMRFamide-like neuropeptide PF3">
    <location>
        <begin position="1"/>
        <end position="7"/>
    </location>
</feature>
<feature type="modified residue" description="Phenylalanine amide" evidence="1">
    <location>
        <position position="7"/>
    </location>
</feature>
<proteinExistence type="evidence at protein level"/>
<name>FAR3_HAECO</name>
<evidence type="ECO:0000269" key="1">
    <source>
    </source>
</evidence>
<evidence type="ECO:0000305" key="2"/>
<dbReference type="Proteomes" id="UP000025227">
    <property type="component" value="Unplaced"/>
</dbReference>
<dbReference type="GO" id="GO:0005576">
    <property type="term" value="C:extracellular region"/>
    <property type="evidence" value="ECO:0007669"/>
    <property type="project" value="UniProtKB-SubCell"/>
</dbReference>
<dbReference type="GO" id="GO:0007218">
    <property type="term" value="P:neuropeptide signaling pathway"/>
    <property type="evidence" value="ECO:0007669"/>
    <property type="project" value="UniProtKB-KW"/>
</dbReference>
<organism>
    <name type="scientific">Haemonchus contortus</name>
    <name type="common">Barber pole worm</name>
    <dbReference type="NCBI Taxonomy" id="6289"/>
    <lineage>
        <taxon>Eukaryota</taxon>
        <taxon>Metazoa</taxon>
        <taxon>Ecdysozoa</taxon>
        <taxon>Nematoda</taxon>
        <taxon>Chromadorea</taxon>
        <taxon>Rhabditida</taxon>
        <taxon>Rhabditina</taxon>
        <taxon>Rhabditomorpha</taxon>
        <taxon>Strongyloidea</taxon>
        <taxon>Trichostrongylidae</taxon>
        <taxon>Haemonchus</taxon>
    </lineage>
</organism>
<reference key="1">
    <citation type="journal article" date="1999" name="Mol. Biochem. Parasitol.">
        <title>Structural characterisation and pharmacology of KHEYLRFamide (AF2) and KSAYMRFamide (PF3/AF8) from Haemonchus contortus.</title>
        <authorList>
            <person name="Marks N.J."/>
            <person name="Sangster N.C."/>
            <person name="Maule A.G."/>
            <person name="Halton D.W."/>
            <person name="Thompson D.P."/>
            <person name="Geary T.G."/>
            <person name="Shaw C."/>
        </authorList>
    </citation>
    <scope>PROTEIN SEQUENCE</scope>
    <scope>AMIDATION AT PHE-7</scope>
    <source>
        <tissue>Neuron</tissue>
    </source>
</reference>